<sequence>MALWQQGQKLYLPPTPVSKVLCSETYVQRKSIFYHAETERLLTVGHPYYQVTVGDKTVPKVSANQFRVFKIQLPDPNQFALPDRTVHNPSKERLVWAVIGVQVSRGQPLGGTVTGHPTFNALLDAENVNRKVTAQTTDDRKQTGLDAKQQQILLLGCTPAEGEYWTTARPCVTDRLENGACPPLELKNKHIEDGDMMEIGFGAADFKTLNASKSDLPLDIQNEICLYPDYLKMAEDAAGNSMFFFARKEQVYVRHIWTRGGSEKEAPSKDFYLKNGRGEETLKIPSVHFGSPSGSLVSTDNQIFNRPYWLFRAQGMNNGIAWNNLLFLTVGDNTRGTNLSISVAADGNALSEYDTGKFNLYHRHMEEYKLAFILELCSVEITAQTLSHLQGLMPSVLQNWEIGVQPPASSILEDTYRYIESPATKCASNVIPPKEDPYAGLKFWSIDLKEKLSLDLDQFPLGRRFLAQQGAGCSTVRKRAVATRNSSKPAKRKKIKA</sequence>
<organism>
    <name type="scientific">Bos taurus papillomavirus 2</name>
    <name type="common">Bovine papillomavirus 2</name>
    <dbReference type="NCBI Taxonomy" id="2758382"/>
    <lineage>
        <taxon>Viruses</taxon>
        <taxon>Monodnaviria</taxon>
        <taxon>Shotokuvirae</taxon>
        <taxon>Cossaviricota</taxon>
        <taxon>Papovaviricetes</taxon>
        <taxon>Zurhausenvirales</taxon>
        <taxon>Papillomaviridae</taxon>
        <taxon>Firstpapillomavirinae</taxon>
        <taxon>Deltapapillomavirus</taxon>
        <taxon>Bovine papillomavirus type 1</taxon>
    </lineage>
</organism>
<feature type="chain" id="PRO_0000133476" description="Major capsid protein L1">
    <location>
        <begin position="1"/>
        <end position="497"/>
    </location>
</feature>
<feature type="disulfide bond" description="Interchain (with C-426)" evidence="1">
    <location>
        <position position="171"/>
    </location>
</feature>
<feature type="disulfide bond" description="Interchain (with C-171)" evidence="1">
    <location>
        <position position="426"/>
    </location>
</feature>
<feature type="sequence conflict" description="In Ref. 1; CAA25908." evidence="2" ref="1">
    <original>L</original>
    <variation>I</variation>
    <location>
        <position position="176"/>
    </location>
</feature>
<feature type="sequence conflict" description="In Ref. 1; CAA25908." evidence="2" ref="1">
    <original>N</original>
    <variation>D</variation>
    <location>
        <position position="323"/>
    </location>
</feature>
<feature type="sequence conflict" description="In Ref. 1; CAA25908." evidence="2" ref="1">
    <original>L</original>
    <variation>V</variation>
    <location>
        <position position="386"/>
    </location>
</feature>
<feature type="sequence conflict" description="In Ref. 1; CAA25908." evidence="2" ref="1">
    <original>K</original>
    <variation>R</variation>
    <location>
        <position position="442"/>
    </location>
</feature>
<name>VL1_BPV2</name>
<keyword id="KW-0167">Capsid protein</keyword>
<keyword id="KW-1015">Disulfide bond</keyword>
<keyword id="KW-1048">Host nucleus</keyword>
<keyword id="KW-0945">Host-virus interaction</keyword>
<keyword id="KW-0426">Late protein</keyword>
<keyword id="KW-1145">T=7 icosahedral capsid protein</keyword>
<keyword id="KW-1161">Viral attachment to host cell</keyword>
<keyword id="KW-1162">Viral penetration into host cytoplasm</keyword>
<keyword id="KW-0946">Virion</keyword>
<keyword id="KW-1164">Virus endocytosis by host</keyword>
<keyword id="KW-1160">Virus entry into host cell</keyword>
<proteinExistence type="inferred from homology"/>
<reference key="1">
    <citation type="journal article" date="1985" name="J. Gen. Virol.">
        <title>Nucleotide sequence of bovine papillomavirus type 2 late region.</title>
        <authorList>
            <person name="Potter H.L."/>
            <person name="Meinke W.J."/>
        </authorList>
    </citation>
    <scope>NUCLEOTIDE SEQUENCE [GENOMIC DNA]</scope>
</reference>
<reference key="2">
    <citation type="submission" date="1988-05" db="EMBL/GenBank/DDBJ databases">
        <authorList>
            <person name="Groff D.E."/>
            <person name="Mitra R."/>
            <person name="Lancaster W.D."/>
        </authorList>
    </citation>
    <scope>NUCLEOTIDE SEQUENCE [GENOMIC DNA]</scope>
</reference>
<gene>
    <name evidence="1" type="primary">L1</name>
</gene>
<evidence type="ECO:0000255" key="1">
    <source>
        <dbReference type="HAMAP-Rule" id="MF_04002"/>
    </source>
</evidence>
<evidence type="ECO:0000305" key="2"/>
<accession>P06458</accession>
<dbReference type="EMBL" id="X01768">
    <property type="protein sequence ID" value="CAA25908.1"/>
    <property type="molecule type" value="Genomic_DNA"/>
</dbReference>
<dbReference type="EMBL" id="M20219">
    <property type="protein sequence ID" value="AAA66840.1"/>
    <property type="molecule type" value="Genomic_DNA"/>
</dbReference>
<dbReference type="PIR" id="A31169">
    <property type="entry name" value="P1WLB2"/>
</dbReference>
<dbReference type="SMR" id="P06458"/>
<dbReference type="Proteomes" id="UP000007612">
    <property type="component" value="Segment"/>
</dbReference>
<dbReference type="GO" id="GO:0042025">
    <property type="term" value="C:host cell nucleus"/>
    <property type="evidence" value="ECO:0007669"/>
    <property type="project" value="UniProtKB-SubCell"/>
</dbReference>
<dbReference type="GO" id="GO:0039620">
    <property type="term" value="C:T=7 icosahedral viral capsid"/>
    <property type="evidence" value="ECO:0007669"/>
    <property type="project" value="UniProtKB-UniRule"/>
</dbReference>
<dbReference type="GO" id="GO:0005198">
    <property type="term" value="F:structural molecule activity"/>
    <property type="evidence" value="ECO:0007669"/>
    <property type="project" value="UniProtKB-UniRule"/>
</dbReference>
<dbReference type="GO" id="GO:0075509">
    <property type="term" value="P:endocytosis involved in viral entry into host cell"/>
    <property type="evidence" value="ECO:0007669"/>
    <property type="project" value="UniProtKB-KW"/>
</dbReference>
<dbReference type="GO" id="GO:0019062">
    <property type="term" value="P:virion attachment to host cell"/>
    <property type="evidence" value="ECO:0007669"/>
    <property type="project" value="UniProtKB-UniRule"/>
</dbReference>
<dbReference type="Gene3D" id="2.60.175.20">
    <property type="entry name" value="Major capsid L1 (late) superfamily, Papillomavirus"/>
    <property type="match status" value="1"/>
</dbReference>
<dbReference type="HAMAP" id="MF_04002">
    <property type="entry name" value="PPV_L1"/>
    <property type="match status" value="1"/>
</dbReference>
<dbReference type="InterPro" id="IPR002210">
    <property type="entry name" value="Capsid_L1_Papillomavir"/>
</dbReference>
<dbReference type="InterPro" id="IPR036973">
    <property type="entry name" value="Capsid_L1_sf_Papillomavir"/>
</dbReference>
<dbReference type="InterPro" id="IPR011222">
    <property type="entry name" value="dsDNA_vir_gr_I_capsid"/>
</dbReference>
<dbReference type="Pfam" id="PF00500">
    <property type="entry name" value="Late_protein_L1"/>
    <property type="match status" value="1"/>
</dbReference>
<dbReference type="PRINTS" id="PR00865">
    <property type="entry name" value="HPVCAPSIDL1"/>
</dbReference>
<dbReference type="SUPFAM" id="SSF88648">
    <property type="entry name" value="Group I dsDNA viruses"/>
    <property type="match status" value="1"/>
</dbReference>
<protein>
    <recommendedName>
        <fullName evidence="1">Major capsid protein L1</fullName>
    </recommendedName>
</protein>
<organismHost>
    <name type="scientific">Bos taurus</name>
    <name type="common">Bovine</name>
    <dbReference type="NCBI Taxonomy" id="9913"/>
</organismHost>
<comment type="function">
    <text evidence="1">Forms an icosahedral capsid with a T=7 symmetry and a 50 nm diameter. The capsid is composed of 72 pentamers linked to each other by disulfide bonds and associated with L2 proteins. Binds to heparan sulfate proteoglycans on cell surface of basal layer keratinocytes to provide initial virion attachment. This binding mediates a conformational change in the virus capsid that facilitates efficient infection. The virion enters the host cell via endocytosis. During virus trafficking, L1 protein dissociates from the viral DNA and the genomic DNA is released to the host nucleus. The virion assembly takes place within the cell nucleus. Encapsulates the genomic DNA together with protein L2.</text>
</comment>
<comment type="subunit">
    <text evidence="1">Self-assembles into homopentamers. The capsid has an icosahedral symmetry and consists of 72 capsomers, with each capsomer being a pentamer of L1. Interacts with the minor capsid protein L2; this interaction is necessary for viral genome encapsidation. Interacts with protein E2; this interaction enhances E2-dependent replication and transcription activation.</text>
</comment>
<comment type="subcellular location">
    <subcellularLocation>
        <location evidence="1">Virion</location>
    </subcellularLocation>
    <subcellularLocation>
        <location evidence="1">Host nucleus</location>
    </subcellularLocation>
</comment>
<comment type="similarity">
    <text evidence="1">Belongs to the papillomaviridae L1 protein family.</text>
</comment>